<proteinExistence type="evidence at protein level"/>
<dbReference type="EC" id="1.2.1.13"/>
<dbReference type="EMBL" id="L27668">
    <property type="protein sequence ID" value="AAA86855.1"/>
    <property type="molecule type" value="Genomic_DNA"/>
</dbReference>
<dbReference type="PIR" id="T07990">
    <property type="entry name" value="T07990"/>
</dbReference>
<dbReference type="RefSeq" id="XP_001689871.1">
    <property type="nucleotide sequence ID" value="XM_001689819.1"/>
</dbReference>
<dbReference type="PDB" id="7ZQ3">
    <property type="method" value="X-ray"/>
    <property type="resolution" value="1.50 A"/>
    <property type="chains" value="O/R=35-374"/>
</dbReference>
<dbReference type="PDB" id="7ZQ4">
    <property type="method" value="X-ray"/>
    <property type="resolution" value="1.70 A"/>
    <property type="chains" value="O/R=35-374"/>
</dbReference>
<dbReference type="PDB" id="7ZQK">
    <property type="method" value="X-ray"/>
    <property type="resolution" value="2.20 A"/>
    <property type="chains" value="O/R=35-374"/>
</dbReference>
<dbReference type="PDBsum" id="7ZQ3"/>
<dbReference type="PDBsum" id="7ZQ4"/>
<dbReference type="PDBsum" id="7ZQK"/>
<dbReference type="SMR" id="P50362"/>
<dbReference type="IntAct" id="P50362">
    <property type="interactions" value="1"/>
</dbReference>
<dbReference type="MINT" id="P50362"/>
<dbReference type="MoonProt" id="P50362"/>
<dbReference type="PaxDb" id="3055-EDP09609"/>
<dbReference type="ProMEX" id="P50362"/>
<dbReference type="EnsemblPlants" id="PNW88018">
    <property type="protein sequence ID" value="PNW88018"/>
    <property type="gene ID" value="CHLRE_01g010900v5"/>
</dbReference>
<dbReference type="Gramene" id="PNW88018">
    <property type="protein sequence ID" value="PNW88018"/>
    <property type="gene ID" value="CHLRE_01g010900v5"/>
</dbReference>
<dbReference type="KEGG" id="cre:CHLRE_01g010900v5"/>
<dbReference type="eggNOG" id="KOG0657">
    <property type="taxonomic scope" value="Eukaryota"/>
</dbReference>
<dbReference type="HOGENOM" id="CLU_030140_0_2_1"/>
<dbReference type="OrthoDB" id="1152826at2759"/>
<dbReference type="UniPathway" id="UPA00116"/>
<dbReference type="GO" id="GO:0009507">
    <property type="term" value="C:chloroplast"/>
    <property type="evidence" value="ECO:0000314"/>
    <property type="project" value="CAFA"/>
</dbReference>
<dbReference type="GO" id="GO:0099080">
    <property type="term" value="C:supramolecular complex"/>
    <property type="evidence" value="ECO:0000314"/>
    <property type="project" value="CAFA"/>
</dbReference>
<dbReference type="GO" id="GO:0047100">
    <property type="term" value="F:glyceraldehyde-3-phosphate dehydrogenase (NADP+) (phosphorylating) activity"/>
    <property type="evidence" value="ECO:0007669"/>
    <property type="project" value="UniProtKB-EC"/>
</dbReference>
<dbReference type="GO" id="GO:0042802">
    <property type="term" value="F:identical protein binding"/>
    <property type="evidence" value="ECO:0000314"/>
    <property type="project" value="CAFA"/>
</dbReference>
<dbReference type="GO" id="GO:0019900">
    <property type="term" value="F:kinase binding"/>
    <property type="evidence" value="ECO:0000353"/>
    <property type="project" value="CAFA"/>
</dbReference>
<dbReference type="GO" id="GO:0051287">
    <property type="term" value="F:NAD binding"/>
    <property type="evidence" value="ECO:0007669"/>
    <property type="project" value="InterPro"/>
</dbReference>
<dbReference type="GO" id="GO:0050661">
    <property type="term" value="F:NADP binding"/>
    <property type="evidence" value="ECO:0007669"/>
    <property type="project" value="InterPro"/>
</dbReference>
<dbReference type="GO" id="GO:0006006">
    <property type="term" value="P:glucose metabolic process"/>
    <property type="evidence" value="ECO:0007669"/>
    <property type="project" value="InterPro"/>
</dbReference>
<dbReference type="GO" id="GO:0019253">
    <property type="term" value="P:reductive pentose-phosphate cycle"/>
    <property type="evidence" value="ECO:0007669"/>
    <property type="project" value="UniProtKB-UniPathway"/>
</dbReference>
<dbReference type="CDD" id="cd18126">
    <property type="entry name" value="GAPDH_I_C"/>
    <property type="match status" value="1"/>
</dbReference>
<dbReference type="CDD" id="cd05214">
    <property type="entry name" value="GAPDH_I_N"/>
    <property type="match status" value="1"/>
</dbReference>
<dbReference type="FunFam" id="3.30.360.10:FF:000002">
    <property type="entry name" value="Glyceraldehyde-3-phosphate dehydrogenase"/>
    <property type="match status" value="1"/>
</dbReference>
<dbReference type="FunFam" id="3.40.50.720:FF:000001">
    <property type="entry name" value="Glyceraldehyde-3-phosphate dehydrogenase"/>
    <property type="match status" value="1"/>
</dbReference>
<dbReference type="Gene3D" id="3.30.360.10">
    <property type="entry name" value="Dihydrodipicolinate Reductase, domain 2"/>
    <property type="match status" value="1"/>
</dbReference>
<dbReference type="Gene3D" id="3.40.50.720">
    <property type="entry name" value="NAD(P)-binding Rossmann-like Domain"/>
    <property type="match status" value="1"/>
</dbReference>
<dbReference type="InterPro" id="IPR020831">
    <property type="entry name" value="GlycerAld/Erythrose_P_DH"/>
</dbReference>
<dbReference type="InterPro" id="IPR020830">
    <property type="entry name" value="GlycerAld_3-P_DH_AS"/>
</dbReference>
<dbReference type="InterPro" id="IPR020829">
    <property type="entry name" value="GlycerAld_3-P_DH_cat"/>
</dbReference>
<dbReference type="InterPro" id="IPR020828">
    <property type="entry name" value="GlycerAld_3-P_DH_NAD(P)-bd"/>
</dbReference>
<dbReference type="InterPro" id="IPR006424">
    <property type="entry name" value="Glyceraldehyde-3-P_DH_1"/>
</dbReference>
<dbReference type="InterPro" id="IPR036291">
    <property type="entry name" value="NAD(P)-bd_dom_sf"/>
</dbReference>
<dbReference type="NCBIfam" id="TIGR01534">
    <property type="entry name" value="GAPDH-I"/>
    <property type="match status" value="1"/>
</dbReference>
<dbReference type="PANTHER" id="PTHR43148">
    <property type="entry name" value="GLYCERALDEHYDE-3-PHOSPHATE DEHYDROGENASE 2"/>
    <property type="match status" value="1"/>
</dbReference>
<dbReference type="Pfam" id="PF02800">
    <property type="entry name" value="Gp_dh_C"/>
    <property type="match status" value="1"/>
</dbReference>
<dbReference type="Pfam" id="PF00044">
    <property type="entry name" value="Gp_dh_N"/>
    <property type="match status" value="1"/>
</dbReference>
<dbReference type="PIRSF" id="PIRSF000149">
    <property type="entry name" value="GAP_DH"/>
    <property type="match status" value="1"/>
</dbReference>
<dbReference type="PRINTS" id="PR00078">
    <property type="entry name" value="G3PDHDRGNASE"/>
</dbReference>
<dbReference type="SMART" id="SM00846">
    <property type="entry name" value="Gp_dh_N"/>
    <property type="match status" value="1"/>
</dbReference>
<dbReference type="SUPFAM" id="SSF55347">
    <property type="entry name" value="Glyceraldehyde-3-phosphate dehydrogenase-like, C-terminal domain"/>
    <property type="match status" value="1"/>
</dbReference>
<dbReference type="SUPFAM" id="SSF51735">
    <property type="entry name" value="NAD(P)-binding Rossmann-fold domains"/>
    <property type="match status" value="1"/>
</dbReference>
<dbReference type="PROSITE" id="PS00071">
    <property type="entry name" value="GAPDH"/>
    <property type="match status" value="1"/>
</dbReference>
<reference key="1">
    <citation type="journal article" date="1994" name="Nature">
        <title>Five identical intron positions in ancient duplicated genes of eubacterial origin.</title>
        <authorList>
            <person name="Kersanach R."/>
            <person name="Brinkmann H."/>
            <person name="Liaud M.-F."/>
            <person name="Zhang D.-X."/>
            <person name="Martin W."/>
            <person name="Cerff R."/>
        </authorList>
    </citation>
    <scope>NUCLEOTIDE SEQUENCE [GENOMIC DNA]</scope>
    <source>
        <strain>1132</strain>
    </source>
</reference>
<reference key="2">
    <citation type="journal article" date="2003" name="Biochemistry">
        <title>The small protein CP12: a protein linker for supramolecular complex assembly.</title>
        <authorList>
            <person name="Graciet E."/>
            <person name="Gans P."/>
            <person name="Wedel N."/>
            <person name="Lebreton S."/>
            <person name="Camadro J.-M."/>
            <person name="Gontero B."/>
        </authorList>
    </citation>
    <scope>SUBUNIT</scope>
    <scope>INTERACTION WITH CP12</scope>
</reference>
<reference key="3">
    <citation type="journal article" date="2003" name="Eur. J. Biochem.">
        <title>Characterization of native and recombinant A4 glyceraldehyde 3-phosphate dehydrogenase. Kinetic evidence for conformation changes upon association with the small protein CP12.</title>
        <authorList>
            <person name="Graciet E."/>
            <person name="Lebreton S."/>
            <person name="Camadro J.-M."/>
            <person name="Gontero B."/>
        </authorList>
    </citation>
    <scope>INTERACTION WITH CP12</scope>
</reference>
<reference key="4">
    <citation type="journal article" date="1997" name="Photosyn. Res.">
        <title>Chlamydomonas reinhardtii NADP-linked glyceraldehyde-3-phosphate dehydrogenase contains the cysteine residues identified as potentially domain-locking in the higher plant enzyme and is light activated.</title>
        <authorList>
            <person name="Li A.D."/>
            <person name="Stevens F.J."/>
            <person name="Huppe H.C."/>
            <person name="Kersanach R."/>
            <person name="Anderson L.E."/>
        </authorList>
    </citation>
    <scope>3D-STRUCTURE MODELING OF 35-374</scope>
</reference>
<protein>
    <recommendedName>
        <fullName>Glyceraldehyde-3-phosphate dehydrogenase A, chloroplastic</fullName>
        <ecNumber>1.2.1.13</ecNumber>
    </recommendedName>
    <alternativeName>
        <fullName>NADP-dependent glyceraldehydephosphate dehydrogenase subunit A</fullName>
    </alternativeName>
</protein>
<accession>P50362</accession>
<keyword id="KW-0002">3D-structure</keyword>
<keyword id="KW-0113">Calvin cycle</keyword>
<keyword id="KW-0150">Chloroplast</keyword>
<keyword id="KW-1015">Disulfide bond</keyword>
<keyword id="KW-0521">NADP</keyword>
<keyword id="KW-0560">Oxidoreductase</keyword>
<keyword id="KW-0934">Plastid</keyword>
<keyword id="KW-0809">Transit peptide</keyword>
<evidence type="ECO:0000250" key="1"/>
<evidence type="ECO:0000255" key="2">
    <source>
        <dbReference type="PROSITE-ProRule" id="PRU10009"/>
    </source>
</evidence>
<evidence type="ECO:0000269" key="3">
    <source>
    </source>
</evidence>
<evidence type="ECO:0000305" key="4"/>
<evidence type="ECO:0007829" key="5">
    <source>
        <dbReference type="PDB" id="7ZQ3"/>
    </source>
</evidence>
<sequence length="374" mass="40304">MAAMMQKSAFTGSAVSSKSGVRAKAARAVVDVRAEKKIRVAINGFGRIGRNFLRCWHGRQNTLLDVVAINDSGGVKQASHLLKYDSTLGTFAADVKIVDDSHISVDGKQIKIVSSRDPLQLPWKEMNIDLVIEGTGVFIDKVGAGKHIQAGASKVLITAPAKDKDIPTFVVGVNEGDYKHEYPIISNASCTTNCLAPFVKVLEQKFGIVKGTMTTTHSYTGDQRLLDASHRDLRRARAAALNIVPTTTGAAKAVSLVLPSLKGKLNGIALRVPTPTVSVVDLVVQVEKKTFAEEVNAAFREAANGPMKGVLHVEDAPLVSIDFKCTDQSTSIDASLTMVMGDDMVKVVAWYDNEWGYSQRVVDLAEVTAKKWVA</sequence>
<comment type="catalytic activity">
    <reaction>
        <text>D-glyceraldehyde 3-phosphate + phosphate + NADP(+) = (2R)-3-phospho-glyceroyl phosphate + NADPH + H(+)</text>
        <dbReference type="Rhea" id="RHEA:10296"/>
        <dbReference type="ChEBI" id="CHEBI:15378"/>
        <dbReference type="ChEBI" id="CHEBI:43474"/>
        <dbReference type="ChEBI" id="CHEBI:57604"/>
        <dbReference type="ChEBI" id="CHEBI:57783"/>
        <dbReference type="ChEBI" id="CHEBI:58349"/>
        <dbReference type="ChEBI" id="CHEBI:59776"/>
        <dbReference type="EC" id="1.2.1.13"/>
    </reaction>
</comment>
<comment type="pathway">
    <text>Carbohydrate biosynthesis; Calvin cycle.</text>
</comment>
<comment type="subunit">
    <text evidence="3">Homotetramer. Component of a complex that contains two dimers of PRK, two tetramers of GAPDH and CP12. CP12 associates with GAPDH, causing its conformation to change. This GAPDH/CP12 complex binds PRK to form a half-complex (one unit). This unit probably dimerizes due partially to interactions between the enzymes of each unit.</text>
</comment>
<comment type="interaction">
    <interactant intactId="EBI-9538536">
        <id>P50362</id>
    </interactant>
    <interactant intactId="EBI-9538486">
        <id>A6Q0K5</id>
        <label>CP12</label>
    </interactant>
    <organismsDiffer>false</organismsDiffer>
    <experiments>2</experiments>
</comment>
<comment type="subcellular location">
    <subcellularLocation>
        <location evidence="1">Plastid</location>
        <location evidence="1">Chloroplast</location>
    </subcellularLocation>
</comment>
<comment type="miscellaneous">
    <text>GAPDHB, the second subunit found in plants, is absent in algae.</text>
</comment>
<comment type="miscellaneous">
    <text>Algae contain three forms of GAPDH: two cytosolic forms which participate in glycolysis and one chloroplastic form which participates in photosynthesis. These three forms are encoded by distinct genes.</text>
</comment>
<comment type="similarity">
    <text evidence="4">Belongs to the glyceraldehyde-3-phosphate dehydrogenase family.</text>
</comment>
<organism>
    <name type="scientific">Chlamydomonas reinhardtii</name>
    <name type="common">Chlamydomonas smithii</name>
    <dbReference type="NCBI Taxonomy" id="3055"/>
    <lineage>
        <taxon>Eukaryota</taxon>
        <taxon>Viridiplantae</taxon>
        <taxon>Chlorophyta</taxon>
        <taxon>core chlorophytes</taxon>
        <taxon>Chlorophyceae</taxon>
        <taxon>CS clade</taxon>
        <taxon>Chlamydomonadales</taxon>
        <taxon>Chlamydomonadaceae</taxon>
        <taxon>Chlamydomonas</taxon>
    </lineage>
</organism>
<name>G3PA_CHLRE</name>
<gene>
    <name type="primary">GAPA</name>
</gene>
<feature type="transit peptide" description="Chloroplast" evidence="1">
    <location>
        <begin position="1"/>
        <end position="34"/>
    </location>
</feature>
<feature type="chain" id="PRO_0000010418" description="Glyceraldehyde-3-phosphate dehydrogenase A, chloroplastic">
    <location>
        <begin position="35"/>
        <end position="374"/>
    </location>
</feature>
<feature type="active site" description="Nucleophile" evidence="2">
    <location>
        <position position="190"/>
    </location>
</feature>
<feature type="binding site" evidence="1">
    <location>
        <begin position="47"/>
        <end position="48"/>
    </location>
    <ligand>
        <name>NADP(+)</name>
        <dbReference type="ChEBI" id="CHEBI:58349"/>
    </ligand>
</feature>
<feature type="binding site" evidence="1">
    <location>
        <position position="71"/>
    </location>
    <ligand>
        <name>NADP(+)</name>
        <dbReference type="ChEBI" id="CHEBI:58349"/>
    </ligand>
</feature>
<feature type="binding site" evidence="1">
    <location>
        <position position="116"/>
    </location>
    <ligand>
        <name>NADP(+)</name>
        <dbReference type="ChEBI" id="CHEBI:58349"/>
    </ligand>
</feature>
<feature type="binding site" evidence="1">
    <location>
        <begin position="189"/>
        <end position="191"/>
    </location>
    <ligand>
        <name>D-glyceraldehyde 3-phosphate</name>
        <dbReference type="ChEBI" id="CHEBI:59776"/>
    </ligand>
</feature>
<feature type="binding site" evidence="1">
    <location>
        <position position="220"/>
    </location>
    <ligand>
        <name>D-glyceraldehyde 3-phosphate</name>
        <dbReference type="ChEBI" id="CHEBI:59776"/>
    </ligand>
</feature>
<feature type="binding site" evidence="1">
    <location>
        <position position="235"/>
    </location>
    <ligand>
        <name>D-glyceraldehyde 3-phosphate</name>
        <dbReference type="ChEBI" id="CHEBI:59776"/>
    </ligand>
</feature>
<feature type="binding site" evidence="1">
    <location>
        <begin position="248"/>
        <end position="249"/>
    </location>
    <ligand>
        <name>D-glyceraldehyde 3-phosphate</name>
        <dbReference type="ChEBI" id="CHEBI:59776"/>
    </ligand>
</feature>
<feature type="binding site" evidence="1">
    <location>
        <position position="271"/>
    </location>
    <ligand>
        <name>D-glyceraldehyde 3-phosphate</name>
        <dbReference type="ChEBI" id="CHEBI:59776"/>
    </ligand>
</feature>
<feature type="binding site" evidence="1">
    <location>
        <position position="353"/>
    </location>
    <ligand>
        <name>NADP(+)</name>
        <dbReference type="ChEBI" id="CHEBI:58349"/>
    </ligand>
</feature>
<feature type="site" description="Activates thiol group during catalysis" evidence="1">
    <location>
        <position position="217"/>
    </location>
</feature>
<feature type="disulfide bond" evidence="1">
    <location>
        <begin position="55"/>
        <end position="325"/>
    </location>
</feature>
<feature type="strand" evidence="5">
    <location>
        <begin position="38"/>
        <end position="43"/>
    </location>
</feature>
<feature type="helix" evidence="5">
    <location>
        <begin position="47"/>
        <end position="57"/>
    </location>
</feature>
<feature type="strand" evidence="5">
    <location>
        <begin position="63"/>
        <end position="70"/>
    </location>
</feature>
<feature type="helix" evidence="5">
    <location>
        <begin position="74"/>
        <end position="83"/>
    </location>
</feature>
<feature type="turn" evidence="5">
    <location>
        <begin position="86"/>
        <end position="88"/>
    </location>
</feature>
<feature type="strand" evidence="5">
    <location>
        <begin position="95"/>
        <end position="99"/>
    </location>
</feature>
<feature type="strand" evidence="5">
    <location>
        <begin position="102"/>
        <end position="105"/>
    </location>
</feature>
<feature type="strand" evidence="5">
    <location>
        <begin position="108"/>
        <end position="113"/>
    </location>
</feature>
<feature type="helix" evidence="5">
    <location>
        <begin position="118"/>
        <end position="120"/>
    </location>
</feature>
<feature type="turn" evidence="5">
    <location>
        <begin position="123"/>
        <end position="127"/>
    </location>
</feature>
<feature type="strand" evidence="5">
    <location>
        <begin position="130"/>
        <end position="133"/>
    </location>
</feature>
<feature type="strand" evidence="5">
    <location>
        <begin position="135"/>
        <end position="137"/>
    </location>
</feature>
<feature type="helix" evidence="5">
    <location>
        <begin position="141"/>
        <end position="149"/>
    </location>
</feature>
<feature type="strand" evidence="5">
    <location>
        <begin position="153"/>
        <end position="159"/>
    </location>
</feature>
<feature type="turn" evidence="5">
    <location>
        <begin position="171"/>
        <end position="173"/>
    </location>
</feature>
<feature type="helix" evidence="5">
    <location>
        <begin position="175"/>
        <end position="177"/>
    </location>
</feature>
<feature type="strand" evidence="5">
    <location>
        <begin position="183"/>
        <end position="186"/>
    </location>
</feature>
<feature type="helix" evidence="5">
    <location>
        <begin position="190"/>
        <end position="205"/>
    </location>
</feature>
<feature type="strand" evidence="5">
    <location>
        <begin position="208"/>
        <end position="218"/>
    </location>
</feature>
<feature type="strand" evidence="5">
    <location>
        <begin position="225"/>
        <end position="227"/>
    </location>
</feature>
<feature type="turn" evidence="5">
    <location>
        <begin position="233"/>
        <end position="236"/>
    </location>
</feature>
<feature type="turn" evidence="5">
    <location>
        <begin position="239"/>
        <end position="241"/>
    </location>
</feature>
<feature type="strand" evidence="5">
    <location>
        <begin position="244"/>
        <end position="247"/>
    </location>
</feature>
<feature type="helix" evidence="5">
    <location>
        <begin position="250"/>
        <end position="257"/>
    </location>
</feature>
<feature type="helix" evidence="5">
    <location>
        <begin position="259"/>
        <end position="261"/>
    </location>
</feature>
<feature type="turn" evidence="5">
    <location>
        <begin position="262"/>
        <end position="264"/>
    </location>
</feature>
<feature type="strand" evidence="5">
    <location>
        <begin position="265"/>
        <end position="273"/>
    </location>
</feature>
<feature type="strand" evidence="5">
    <location>
        <begin position="278"/>
        <end position="288"/>
    </location>
</feature>
<feature type="helix" evidence="5">
    <location>
        <begin position="292"/>
        <end position="304"/>
    </location>
</feature>
<feature type="turn" evidence="5">
    <location>
        <begin position="305"/>
        <end position="310"/>
    </location>
</feature>
<feature type="strand" evidence="5">
    <location>
        <begin position="311"/>
        <end position="314"/>
    </location>
</feature>
<feature type="helix" evidence="5">
    <location>
        <begin position="320"/>
        <end position="323"/>
    </location>
</feature>
<feature type="strand" evidence="5">
    <location>
        <begin position="328"/>
        <end position="333"/>
    </location>
</feature>
<feature type="helix" evidence="5">
    <location>
        <begin position="334"/>
        <end position="336"/>
    </location>
</feature>
<feature type="strand" evidence="5">
    <location>
        <begin position="338"/>
        <end position="340"/>
    </location>
</feature>
<feature type="turn" evidence="5">
    <location>
        <begin position="341"/>
        <end position="343"/>
    </location>
</feature>
<feature type="strand" evidence="5">
    <location>
        <begin position="344"/>
        <end position="351"/>
    </location>
</feature>
<feature type="helix" evidence="5">
    <location>
        <begin position="355"/>
        <end position="370"/>
    </location>
</feature>